<protein>
    <recommendedName>
        <fullName evidence="1">Small ribosomal subunit protein uS5</fullName>
    </recommendedName>
    <alternativeName>
        <fullName evidence="3">30S ribosomal protein S5</fullName>
    </alternativeName>
</protein>
<comment type="function">
    <text evidence="1">With S4 and S12 plays an important role in translational accuracy.</text>
</comment>
<comment type="function">
    <text evidence="1">Located at the back of the 30S subunit body where it stabilizes the conformation of the head with respect to the body.</text>
</comment>
<comment type="subunit">
    <text evidence="1">Part of the 30S ribosomal subunit. Contacts proteins S4 and S8.</text>
</comment>
<comment type="domain">
    <text>The N-terminal domain interacts with the head of the 30S subunit; the C-terminal domain interacts with the body and contacts protein S4. The interaction surface between S4 and S5 is involved in control of translational fidelity.</text>
</comment>
<comment type="similarity">
    <text evidence="1">Belongs to the universal ribosomal protein uS5 family.</text>
</comment>
<feature type="chain" id="PRO_0000323065" description="Small ribosomal subunit protein uS5">
    <location>
        <begin position="1"/>
        <end position="223"/>
    </location>
</feature>
<feature type="domain" description="S5 DRBM" evidence="1">
    <location>
        <begin position="54"/>
        <end position="117"/>
    </location>
</feature>
<feature type="region of interest" description="Disordered" evidence="2">
    <location>
        <begin position="1"/>
        <end position="51"/>
    </location>
</feature>
<feature type="compositionally biased region" description="Low complexity" evidence="2">
    <location>
        <begin position="1"/>
        <end position="15"/>
    </location>
</feature>
<feature type="compositionally biased region" description="Basic and acidic residues" evidence="2">
    <location>
        <begin position="16"/>
        <end position="51"/>
    </location>
</feature>
<keyword id="KW-0687">Ribonucleoprotein</keyword>
<keyword id="KW-0689">Ribosomal protein</keyword>
<keyword id="KW-0694">RNA-binding</keyword>
<keyword id="KW-0699">rRNA-binding</keyword>
<organism>
    <name type="scientific">Paenarthrobacter aurescens (strain TC1)</name>
    <dbReference type="NCBI Taxonomy" id="290340"/>
    <lineage>
        <taxon>Bacteria</taxon>
        <taxon>Bacillati</taxon>
        <taxon>Actinomycetota</taxon>
        <taxon>Actinomycetes</taxon>
        <taxon>Micrococcales</taxon>
        <taxon>Micrococcaceae</taxon>
        <taxon>Paenarthrobacter</taxon>
    </lineage>
</organism>
<evidence type="ECO:0000255" key="1">
    <source>
        <dbReference type="HAMAP-Rule" id="MF_01307"/>
    </source>
</evidence>
<evidence type="ECO:0000256" key="2">
    <source>
        <dbReference type="SAM" id="MobiDB-lite"/>
    </source>
</evidence>
<evidence type="ECO:0000305" key="3"/>
<gene>
    <name evidence="1" type="primary">rpsE</name>
    <name type="ordered locus">AAur_2932</name>
</gene>
<proteinExistence type="inferred from homology"/>
<name>RS5_PAEAT</name>
<reference key="1">
    <citation type="journal article" date="2006" name="PLoS Genet.">
        <title>Secrets of soil survival revealed by the genome sequence of Arthrobacter aurescens TC1.</title>
        <authorList>
            <person name="Mongodin E.F."/>
            <person name="Shapir N."/>
            <person name="Daugherty S.C."/>
            <person name="DeBoy R.T."/>
            <person name="Emerson J.B."/>
            <person name="Shvartzbeyn A."/>
            <person name="Radune D."/>
            <person name="Vamathevan J."/>
            <person name="Riggs F."/>
            <person name="Grinberg V."/>
            <person name="Khouri H.M."/>
            <person name="Wackett L.P."/>
            <person name="Nelson K.E."/>
            <person name="Sadowsky M.J."/>
        </authorList>
    </citation>
    <scope>NUCLEOTIDE SEQUENCE [LARGE SCALE GENOMIC DNA]</scope>
    <source>
        <strain>TC1</strain>
    </source>
</reference>
<dbReference type="EMBL" id="CP000474">
    <property type="protein sequence ID" value="ABM09869.1"/>
    <property type="molecule type" value="Genomic_DNA"/>
</dbReference>
<dbReference type="SMR" id="A1R8S9"/>
<dbReference type="STRING" id="290340.AAur_2932"/>
<dbReference type="KEGG" id="aau:AAur_2932"/>
<dbReference type="eggNOG" id="COG0098">
    <property type="taxonomic scope" value="Bacteria"/>
</dbReference>
<dbReference type="HOGENOM" id="CLU_065898_1_0_11"/>
<dbReference type="Proteomes" id="UP000000637">
    <property type="component" value="Chromosome"/>
</dbReference>
<dbReference type="GO" id="GO:0015935">
    <property type="term" value="C:small ribosomal subunit"/>
    <property type="evidence" value="ECO:0007669"/>
    <property type="project" value="InterPro"/>
</dbReference>
<dbReference type="GO" id="GO:0019843">
    <property type="term" value="F:rRNA binding"/>
    <property type="evidence" value="ECO:0007669"/>
    <property type="project" value="UniProtKB-UniRule"/>
</dbReference>
<dbReference type="GO" id="GO:0003735">
    <property type="term" value="F:structural constituent of ribosome"/>
    <property type="evidence" value="ECO:0007669"/>
    <property type="project" value="InterPro"/>
</dbReference>
<dbReference type="GO" id="GO:0006412">
    <property type="term" value="P:translation"/>
    <property type="evidence" value="ECO:0007669"/>
    <property type="project" value="UniProtKB-UniRule"/>
</dbReference>
<dbReference type="FunFam" id="3.30.160.20:FF:000001">
    <property type="entry name" value="30S ribosomal protein S5"/>
    <property type="match status" value="1"/>
</dbReference>
<dbReference type="FunFam" id="3.30.230.10:FF:000002">
    <property type="entry name" value="30S ribosomal protein S5"/>
    <property type="match status" value="1"/>
</dbReference>
<dbReference type="Gene3D" id="3.30.160.20">
    <property type="match status" value="1"/>
</dbReference>
<dbReference type="Gene3D" id="3.30.230.10">
    <property type="match status" value="1"/>
</dbReference>
<dbReference type="HAMAP" id="MF_01307_B">
    <property type="entry name" value="Ribosomal_uS5_B"/>
    <property type="match status" value="1"/>
</dbReference>
<dbReference type="InterPro" id="IPR020568">
    <property type="entry name" value="Ribosomal_Su5_D2-typ_SF"/>
</dbReference>
<dbReference type="InterPro" id="IPR000851">
    <property type="entry name" value="Ribosomal_uS5"/>
</dbReference>
<dbReference type="InterPro" id="IPR005712">
    <property type="entry name" value="Ribosomal_uS5_bac-type"/>
</dbReference>
<dbReference type="InterPro" id="IPR005324">
    <property type="entry name" value="Ribosomal_uS5_C"/>
</dbReference>
<dbReference type="InterPro" id="IPR013810">
    <property type="entry name" value="Ribosomal_uS5_N"/>
</dbReference>
<dbReference type="InterPro" id="IPR018192">
    <property type="entry name" value="Ribosomal_uS5_N_CS"/>
</dbReference>
<dbReference type="InterPro" id="IPR014721">
    <property type="entry name" value="Ribsml_uS5_D2-typ_fold_subgr"/>
</dbReference>
<dbReference type="NCBIfam" id="TIGR01021">
    <property type="entry name" value="rpsE_bact"/>
    <property type="match status" value="1"/>
</dbReference>
<dbReference type="PANTHER" id="PTHR48277">
    <property type="entry name" value="MITOCHONDRIAL RIBOSOMAL PROTEIN S5"/>
    <property type="match status" value="1"/>
</dbReference>
<dbReference type="PANTHER" id="PTHR48277:SF1">
    <property type="entry name" value="MITOCHONDRIAL RIBOSOMAL PROTEIN S5"/>
    <property type="match status" value="1"/>
</dbReference>
<dbReference type="Pfam" id="PF00333">
    <property type="entry name" value="Ribosomal_S5"/>
    <property type="match status" value="1"/>
</dbReference>
<dbReference type="Pfam" id="PF03719">
    <property type="entry name" value="Ribosomal_S5_C"/>
    <property type="match status" value="1"/>
</dbReference>
<dbReference type="SUPFAM" id="SSF54768">
    <property type="entry name" value="dsRNA-binding domain-like"/>
    <property type="match status" value="1"/>
</dbReference>
<dbReference type="SUPFAM" id="SSF54211">
    <property type="entry name" value="Ribosomal protein S5 domain 2-like"/>
    <property type="match status" value="1"/>
</dbReference>
<dbReference type="PROSITE" id="PS00585">
    <property type="entry name" value="RIBOSOMAL_S5"/>
    <property type="match status" value="1"/>
</dbReference>
<dbReference type="PROSITE" id="PS50881">
    <property type="entry name" value="S5_DSRBD"/>
    <property type="match status" value="1"/>
</dbReference>
<sequence length="223" mass="22914">MTEAVAAEATETAPATDDRRGGRRGERGDRGQGRGDRGGRGGRDGGREAEKSQFVERVVTINRVAKVVKGGRRFSFTALVVVGDGNGMVGVGYGKAKEVPAAIAKGVEEAKKSFFRVPRVGSTIPHRVQGEAAAGVVLLRPASAGTGVIAGGPVRAVLECVGIHDILSKSLGSSNAINIVHATVAALKQLEEPASVAARRGLPLDEVAPAALVRALQNQKAGV</sequence>
<accession>A1R8S9</accession>